<organism>
    <name type="scientific">Pelophylax lessonae</name>
    <name type="common">Pool frog</name>
    <name type="synonym">Rana lessonae</name>
    <dbReference type="NCBI Taxonomy" id="45623"/>
    <lineage>
        <taxon>Eukaryota</taxon>
        <taxon>Metazoa</taxon>
        <taxon>Chordata</taxon>
        <taxon>Craniata</taxon>
        <taxon>Vertebrata</taxon>
        <taxon>Euteleostomi</taxon>
        <taxon>Amphibia</taxon>
        <taxon>Batrachia</taxon>
        <taxon>Anura</taxon>
        <taxon>Neobatrachia</taxon>
        <taxon>Ranoidea</taxon>
        <taxon>Ranidae</taxon>
        <taxon>Pelophylax</taxon>
    </lineage>
</organism>
<comment type="function">
    <text>Shows antibacterial activity against representative Gram-negative and Gram-positive bacterial species, and hemolytic activity.</text>
</comment>
<comment type="subcellular location">
    <subcellularLocation>
        <location>Secreted</location>
    </subcellularLocation>
</comment>
<comment type="tissue specificity">
    <text>Expressed by the skin glands.</text>
</comment>
<comment type="similarity">
    <text evidence="2">Belongs to the frog skin active peptide (FSAP) family. Brevinin subfamily.</text>
</comment>
<protein>
    <recommendedName>
        <fullName>Esculentin-1</fullName>
    </recommendedName>
</protein>
<accession>P32414</accession>
<reference key="1">
    <citation type="journal article" date="1993" name="FEBS Lett.">
        <title>Novel antimicrobial peptides from skin secretion of the European frog Rana esculenta.</title>
        <authorList>
            <person name="Simmaco M."/>
            <person name="Mignogna G."/>
            <person name="Barra D."/>
            <person name="Bossa F."/>
        </authorList>
    </citation>
    <scope>PROTEIN SEQUENCE</scope>
    <scope>DISULFIDE BOND</scope>
    <source>
        <tissue>Skin secretion</tissue>
    </source>
</reference>
<feature type="chain" id="PRO_0000165366" description="Esculentin-1">
    <location>
        <begin position="1"/>
        <end position="46"/>
    </location>
</feature>
<feature type="disulfide bond" evidence="1">
    <location>
        <begin position="40"/>
        <end position="46"/>
    </location>
</feature>
<name>ES1_PELLE</name>
<sequence length="46" mass="4888">GIFSKLGRKKIKNLLISGLKNVGKEVGMDVVRTGIDIAGCKIKGEC</sequence>
<keyword id="KW-0878">Amphibian defense peptide</keyword>
<keyword id="KW-0044">Antibiotic</keyword>
<keyword id="KW-0929">Antimicrobial</keyword>
<keyword id="KW-0204">Cytolysis</keyword>
<keyword id="KW-0903">Direct protein sequencing</keyword>
<keyword id="KW-1015">Disulfide bond</keyword>
<keyword id="KW-0354">Hemolysis</keyword>
<keyword id="KW-0964">Secreted</keyword>
<dbReference type="PIR" id="S33731">
    <property type="entry name" value="S33731"/>
</dbReference>
<dbReference type="SMR" id="P32414"/>
<dbReference type="GO" id="GO:0005576">
    <property type="term" value="C:extracellular region"/>
    <property type="evidence" value="ECO:0000314"/>
    <property type="project" value="UniProtKB"/>
</dbReference>
<dbReference type="GO" id="GO:0050829">
    <property type="term" value="P:defense response to Gram-negative bacterium"/>
    <property type="evidence" value="ECO:0000314"/>
    <property type="project" value="UniProtKB"/>
</dbReference>
<dbReference type="GO" id="GO:0050830">
    <property type="term" value="P:defense response to Gram-positive bacterium"/>
    <property type="evidence" value="ECO:0000314"/>
    <property type="project" value="UniProtKB"/>
</dbReference>
<dbReference type="GO" id="GO:0044179">
    <property type="term" value="P:hemolysis in another organism"/>
    <property type="evidence" value="ECO:0000314"/>
    <property type="project" value="UniProtKB"/>
</dbReference>
<dbReference type="InterPro" id="IPR012521">
    <property type="entry name" value="Antimicrobial_frog_2"/>
</dbReference>
<dbReference type="Pfam" id="PF08023">
    <property type="entry name" value="Antimicrobial_2"/>
    <property type="match status" value="1"/>
</dbReference>
<proteinExistence type="evidence at protein level"/>
<evidence type="ECO:0000269" key="1">
    <source>
    </source>
</evidence>
<evidence type="ECO:0000305" key="2"/>